<comment type="function">
    <text evidence="1">Small subunit of the glutamine-dependent carbamoyl phosphate synthetase (CPSase). CPSase catalyzes the formation of carbamoyl phosphate from the ammonia moiety of glutamine, carbonate, and phosphate donated by ATP, constituting the first step of 2 biosynthetic pathways, one leading to arginine and/or urea and the other to pyrimidine nucleotides. The small subunit (glutamine amidotransferase) binds and cleaves glutamine to supply the large subunit with the substrate ammonia.</text>
</comment>
<comment type="catalytic activity">
    <reaction evidence="1">
        <text>hydrogencarbonate + L-glutamine + 2 ATP + H2O = carbamoyl phosphate + L-glutamate + 2 ADP + phosphate + 2 H(+)</text>
        <dbReference type="Rhea" id="RHEA:18633"/>
        <dbReference type="ChEBI" id="CHEBI:15377"/>
        <dbReference type="ChEBI" id="CHEBI:15378"/>
        <dbReference type="ChEBI" id="CHEBI:17544"/>
        <dbReference type="ChEBI" id="CHEBI:29985"/>
        <dbReference type="ChEBI" id="CHEBI:30616"/>
        <dbReference type="ChEBI" id="CHEBI:43474"/>
        <dbReference type="ChEBI" id="CHEBI:58228"/>
        <dbReference type="ChEBI" id="CHEBI:58359"/>
        <dbReference type="ChEBI" id="CHEBI:456216"/>
        <dbReference type="EC" id="6.3.5.5"/>
    </reaction>
</comment>
<comment type="catalytic activity">
    <molecule>Carbamoyl phosphate synthase small chain</molecule>
    <reaction evidence="1">
        <text>L-glutamine + H2O = L-glutamate + NH4(+)</text>
        <dbReference type="Rhea" id="RHEA:15889"/>
        <dbReference type="ChEBI" id="CHEBI:15377"/>
        <dbReference type="ChEBI" id="CHEBI:28938"/>
        <dbReference type="ChEBI" id="CHEBI:29985"/>
        <dbReference type="ChEBI" id="CHEBI:58359"/>
    </reaction>
</comment>
<comment type="pathway">
    <text evidence="1">Amino-acid biosynthesis; L-arginine biosynthesis; carbamoyl phosphate from bicarbonate: step 1/1.</text>
</comment>
<comment type="pathway">
    <text evidence="1">Pyrimidine metabolism; UMP biosynthesis via de novo pathway; (S)-dihydroorotate from bicarbonate: step 1/3.</text>
</comment>
<comment type="subunit">
    <text evidence="1">Composed of two chains; the small (or glutamine) chain promotes the hydrolysis of glutamine to ammonia, which is used by the large (or ammonia) chain to synthesize carbamoyl phosphate. Tetramer of heterodimers (alpha,beta)4.</text>
</comment>
<comment type="similarity">
    <text evidence="1">Belongs to the CarA family.</text>
</comment>
<gene>
    <name evidence="1" type="primary">carA</name>
    <name type="ordered locus">MA_2144</name>
</gene>
<feature type="chain" id="PRO_0000112357" description="Carbamoyl phosphate synthase small chain">
    <location>
        <begin position="1"/>
        <end position="368"/>
    </location>
</feature>
<feature type="domain" description="Glutamine amidotransferase type-1" evidence="1">
    <location>
        <begin position="182"/>
        <end position="368"/>
    </location>
</feature>
<feature type="region of interest" description="CPSase" evidence="1">
    <location>
        <begin position="1"/>
        <end position="178"/>
    </location>
</feature>
<feature type="active site" description="Nucleophile" evidence="1">
    <location>
        <position position="257"/>
    </location>
</feature>
<feature type="active site" evidence="1">
    <location>
        <position position="342"/>
    </location>
</feature>
<feature type="active site" evidence="1">
    <location>
        <position position="344"/>
    </location>
</feature>
<feature type="binding site" evidence="1">
    <location>
        <position position="45"/>
    </location>
    <ligand>
        <name>L-glutamine</name>
        <dbReference type="ChEBI" id="CHEBI:58359"/>
    </ligand>
</feature>
<feature type="binding site" evidence="1">
    <location>
        <position position="230"/>
    </location>
    <ligand>
        <name>L-glutamine</name>
        <dbReference type="ChEBI" id="CHEBI:58359"/>
    </ligand>
</feature>
<feature type="binding site" evidence="1">
    <location>
        <position position="232"/>
    </location>
    <ligand>
        <name>L-glutamine</name>
        <dbReference type="ChEBI" id="CHEBI:58359"/>
    </ligand>
</feature>
<feature type="binding site" evidence="1">
    <location>
        <position position="258"/>
    </location>
    <ligand>
        <name>L-glutamine</name>
        <dbReference type="ChEBI" id="CHEBI:58359"/>
    </ligand>
</feature>
<feature type="binding site" evidence="1">
    <location>
        <position position="261"/>
    </location>
    <ligand>
        <name>L-glutamine</name>
        <dbReference type="ChEBI" id="CHEBI:58359"/>
    </ligand>
</feature>
<feature type="binding site" evidence="1">
    <location>
        <position position="299"/>
    </location>
    <ligand>
        <name>L-glutamine</name>
        <dbReference type="ChEBI" id="CHEBI:58359"/>
    </ligand>
</feature>
<feature type="binding site" evidence="1">
    <location>
        <position position="301"/>
    </location>
    <ligand>
        <name>L-glutamine</name>
        <dbReference type="ChEBI" id="CHEBI:58359"/>
    </ligand>
</feature>
<feature type="binding site" evidence="1">
    <location>
        <position position="302"/>
    </location>
    <ligand>
        <name>L-glutamine</name>
        <dbReference type="ChEBI" id="CHEBI:58359"/>
    </ligand>
</feature>
<protein>
    <recommendedName>
        <fullName evidence="1">Carbamoyl phosphate synthase small chain</fullName>
        <ecNumber evidence="1">6.3.5.5</ecNumber>
    </recommendedName>
    <alternativeName>
        <fullName evidence="1">Carbamoyl phosphate synthetase glutamine chain</fullName>
    </alternativeName>
</protein>
<reference key="1">
    <citation type="journal article" date="2002" name="Genome Res.">
        <title>The genome of Methanosarcina acetivorans reveals extensive metabolic and physiological diversity.</title>
        <authorList>
            <person name="Galagan J.E."/>
            <person name="Nusbaum C."/>
            <person name="Roy A."/>
            <person name="Endrizzi M.G."/>
            <person name="Macdonald P."/>
            <person name="FitzHugh W."/>
            <person name="Calvo S."/>
            <person name="Engels R."/>
            <person name="Smirnov S."/>
            <person name="Atnoor D."/>
            <person name="Brown A."/>
            <person name="Allen N."/>
            <person name="Naylor J."/>
            <person name="Stange-Thomann N."/>
            <person name="DeArellano K."/>
            <person name="Johnson R."/>
            <person name="Linton L."/>
            <person name="McEwan P."/>
            <person name="McKernan K."/>
            <person name="Talamas J."/>
            <person name="Tirrell A."/>
            <person name="Ye W."/>
            <person name="Zimmer A."/>
            <person name="Barber R.D."/>
            <person name="Cann I."/>
            <person name="Graham D.E."/>
            <person name="Grahame D.A."/>
            <person name="Guss A.M."/>
            <person name="Hedderich R."/>
            <person name="Ingram-Smith C."/>
            <person name="Kuettner H.C."/>
            <person name="Krzycki J.A."/>
            <person name="Leigh J.A."/>
            <person name="Li W."/>
            <person name="Liu J."/>
            <person name="Mukhopadhyay B."/>
            <person name="Reeve J.N."/>
            <person name="Smith K."/>
            <person name="Springer T.A."/>
            <person name="Umayam L.A."/>
            <person name="White O."/>
            <person name="White R.H."/>
            <person name="de Macario E.C."/>
            <person name="Ferry J.G."/>
            <person name="Jarrell K.F."/>
            <person name="Jing H."/>
            <person name="Macario A.J.L."/>
            <person name="Paulsen I.T."/>
            <person name="Pritchett M."/>
            <person name="Sowers K.R."/>
            <person name="Swanson R.V."/>
            <person name="Zinder S.H."/>
            <person name="Lander E."/>
            <person name="Metcalf W.W."/>
            <person name="Birren B."/>
        </authorList>
    </citation>
    <scope>NUCLEOTIDE SEQUENCE [LARGE SCALE GENOMIC DNA]</scope>
    <source>
        <strain>ATCC 35395 / DSM 2834 / JCM 12185 / C2A</strain>
    </source>
</reference>
<sequence length="368" mass="39829">MKAVLGLEDGTVIRGTGFGAEGTACGELVFTTQFTGYEEALTDPSYKGQILMFTYPLIGNYGVSGERFQSDNIHAEGLVVREACKKPYHYKSTRSIHQFLEDEGKPGIEGVDTRMLTIGARERGTMRAALITGSDDGEEAVKVARNFPQITDEELIARVTCKEPHFIPGAECAWKGSGKPKHAVVVDLGIKRNIINNLHKRGIDLTLVPATTKPKEIAGFEPDLLFISNGPGDPEKATDAINAVKAFAGTIPVAGICFGHQIISLAMGARTYKLKFGHRGGNQPVKDLIENKIFISSQNHGYAVDADSLEGTGLYVKYLNANDKTVEGVSHKDLDIFSVQFHPEAQAGPMDTEETFFGKVVKVLGGDL</sequence>
<name>CARA_METAC</name>
<evidence type="ECO:0000255" key="1">
    <source>
        <dbReference type="HAMAP-Rule" id="MF_01209"/>
    </source>
</evidence>
<dbReference type="EC" id="6.3.5.5" evidence="1"/>
<dbReference type="EMBL" id="AE010299">
    <property type="protein sequence ID" value="AAM05542.1"/>
    <property type="molecule type" value="Genomic_DNA"/>
</dbReference>
<dbReference type="RefSeq" id="WP_011022130.1">
    <property type="nucleotide sequence ID" value="NC_003552.1"/>
</dbReference>
<dbReference type="SMR" id="Q8TNY3"/>
<dbReference type="FunCoup" id="Q8TNY3">
    <property type="interactions" value="252"/>
</dbReference>
<dbReference type="STRING" id="188937.MA_2144"/>
<dbReference type="EnsemblBacteria" id="AAM05542">
    <property type="protein sequence ID" value="AAM05542"/>
    <property type="gene ID" value="MA_2144"/>
</dbReference>
<dbReference type="GeneID" id="1474032"/>
<dbReference type="KEGG" id="mac:MA_2144"/>
<dbReference type="HOGENOM" id="CLU_035901_2_1_2"/>
<dbReference type="InParanoid" id="Q8TNY3"/>
<dbReference type="OrthoDB" id="7675at2157"/>
<dbReference type="PhylomeDB" id="Q8TNY3"/>
<dbReference type="UniPathway" id="UPA00068">
    <property type="reaction ID" value="UER00171"/>
</dbReference>
<dbReference type="UniPathway" id="UPA00070">
    <property type="reaction ID" value="UER00115"/>
</dbReference>
<dbReference type="Proteomes" id="UP000002487">
    <property type="component" value="Chromosome"/>
</dbReference>
<dbReference type="GO" id="GO:0005951">
    <property type="term" value="C:carbamoyl-phosphate synthase complex"/>
    <property type="evidence" value="ECO:0000318"/>
    <property type="project" value="GO_Central"/>
</dbReference>
<dbReference type="GO" id="GO:0005737">
    <property type="term" value="C:cytoplasm"/>
    <property type="evidence" value="ECO:0000318"/>
    <property type="project" value="GO_Central"/>
</dbReference>
<dbReference type="GO" id="GO:0005524">
    <property type="term" value="F:ATP binding"/>
    <property type="evidence" value="ECO:0007669"/>
    <property type="project" value="UniProtKB-UniRule"/>
</dbReference>
<dbReference type="GO" id="GO:0004088">
    <property type="term" value="F:carbamoyl-phosphate synthase (glutamine-hydrolyzing) activity"/>
    <property type="evidence" value="ECO:0007669"/>
    <property type="project" value="UniProtKB-UniRule"/>
</dbReference>
<dbReference type="GO" id="GO:0004359">
    <property type="term" value="F:glutaminase activity"/>
    <property type="evidence" value="ECO:0007669"/>
    <property type="project" value="RHEA"/>
</dbReference>
<dbReference type="GO" id="GO:0006207">
    <property type="term" value="P:'de novo' pyrimidine nucleobase biosynthetic process"/>
    <property type="evidence" value="ECO:0007669"/>
    <property type="project" value="InterPro"/>
</dbReference>
<dbReference type="GO" id="GO:0044205">
    <property type="term" value="P:'de novo' UMP biosynthetic process"/>
    <property type="evidence" value="ECO:0007669"/>
    <property type="project" value="UniProtKB-UniRule"/>
</dbReference>
<dbReference type="GO" id="GO:0006541">
    <property type="term" value="P:glutamine metabolic process"/>
    <property type="evidence" value="ECO:0007669"/>
    <property type="project" value="InterPro"/>
</dbReference>
<dbReference type="GO" id="GO:0006526">
    <property type="term" value="P:L-arginine biosynthetic process"/>
    <property type="evidence" value="ECO:0000318"/>
    <property type="project" value="GO_Central"/>
</dbReference>
<dbReference type="CDD" id="cd01744">
    <property type="entry name" value="GATase1_CPSase"/>
    <property type="match status" value="1"/>
</dbReference>
<dbReference type="FunFam" id="3.40.50.880:FF:000126">
    <property type="entry name" value="Carbamoyl-phosphate synthase small chain"/>
    <property type="match status" value="1"/>
</dbReference>
<dbReference type="FunFam" id="3.50.30.20:FF:000001">
    <property type="entry name" value="Carbamoyl-phosphate synthase small chain"/>
    <property type="match status" value="1"/>
</dbReference>
<dbReference type="Gene3D" id="3.40.50.880">
    <property type="match status" value="1"/>
</dbReference>
<dbReference type="Gene3D" id="3.50.30.20">
    <property type="entry name" value="Carbamoyl-phosphate synthase small subunit, N-terminal domain"/>
    <property type="match status" value="1"/>
</dbReference>
<dbReference type="HAMAP" id="MF_01209">
    <property type="entry name" value="CPSase_S_chain"/>
    <property type="match status" value="1"/>
</dbReference>
<dbReference type="InterPro" id="IPR050472">
    <property type="entry name" value="Anth_synth/Amidotransfase"/>
</dbReference>
<dbReference type="InterPro" id="IPR006274">
    <property type="entry name" value="CarbamoylP_synth_ssu"/>
</dbReference>
<dbReference type="InterPro" id="IPR002474">
    <property type="entry name" value="CarbamoylP_synth_ssu_N"/>
</dbReference>
<dbReference type="InterPro" id="IPR036480">
    <property type="entry name" value="CarbP_synth_ssu_N_sf"/>
</dbReference>
<dbReference type="InterPro" id="IPR029062">
    <property type="entry name" value="Class_I_gatase-like"/>
</dbReference>
<dbReference type="InterPro" id="IPR035686">
    <property type="entry name" value="CPSase_GATase1"/>
</dbReference>
<dbReference type="InterPro" id="IPR017926">
    <property type="entry name" value="GATASE"/>
</dbReference>
<dbReference type="NCBIfam" id="TIGR01368">
    <property type="entry name" value="CPSaseIIsmall"/>
    <property type="match status" value="1"/>
</dbReference>
<dbReference type="NCBIfam" id="NF009475">
    <property type="entry name" value="PRK12838.1"/>
    <property type="match status" value="1"/>
</dbReference>
<dbReference type="PANTHER" id="PTHR43418:SF7">
    <property type="entry name" value="CARBAMOYL-PHOSPHATE SYNTHASE SMALL CHAIN"/>
    <property type="match status" value="1"/>
</dbReference>
<dbReference type="PANTHER" id="PTHR43418">
    <property type="entry name" value="MULTIFUNCTIONAL TRYPTOPHAN BIOSYNTHESIS PROTEIN-RELATED"/>
    <property type="match status" value="1"/>
</dbReference>
<dbReference type="Pfam" id="PF00988">
    <property type="entry name" value="CPSase_sm_chain"/>
    <property type="match status" value="1"/>
</dbReference>
<dbReference type="Pfam" id="PF00117">
    <property type="entry name" value="GATase"/>
    <property type="match status" value="1"/>
</dbReference>
<dbReference type="PRINTS" id="PR00097">
    <property type="entry name" value="ANTSNTHASEII"/>
</dbReference>
<dbReference type="PRINTS" id="PR00099">
    <property type="entry name" value="CPSGATASE"/>
</dbReference>
<dbReference type="PRINTS" id="PR00096">
    <property type="entry name" value="GATASE"/>
</dbReference>
<dbReference type="SMART" id="SM01097">
    <property type="entry name" value="CPSase_sm_chain"/>
    <property type="match status" value="1"/>
</dbReference>
<dbReference type="SUPFAM" id="SSF52021">
    <property type="entry name" value="Carbamoyl phosphate synthetase, small subunit N-terminal domain"/>
    <property type="match status" value="1"/>
</dbReference>
<dbReference type="SUPFAM" id="SSF52317">
    <property type="entry name" value="Class I glutamine amidotransferase-like"/>
    <property type="match status" value="1"/>
</dbReference>
<dbReference type="PROSITE" id="PS51273">
    <property type="entry name" value="GATASE_TYPE_1"/>
    <property type="match status" value="1"/>
</dbReference>
<keyword id="KW-0028">Amino-acid biosynthesis</keyword>
<keyword id="KW-0055">Arginine biosynthesis</keyword>
<keyword id="KW-0067">ATP-binding</keyword>
<keyword id="KW-0315">Glutamine amidotransferase</keyword>
<keyword id="KW-0436">Ligase</keyword>
<keyword id="KW-0547">Nucleotide-binding</keyword>
<keyword id="KW-0665">Pyrimidine biosynthesis</keyword>
<keyword id="KW-1185">Reference proteome</keyword>
<organism>
    <name type="scientific">Methanosarcina acetivorans (strain ATCC 35395 / DSM 2834 / JCM 12185 / C2A)</name>
    <dbReference type="NCBI Taxonomy" id="188937"/>
    <lineage>
        <taxon>Archaea</taxon>
        <taxon>Methanobacteriati</taxon>
        <taxon>Methanobacteriota</taxon>
        <taxon>Stenosarchaea group</taxon>
        <taxon>Methanomicrobia</taxon>
        <taxon>Methanosarcinales</taxon>
        <taxon>Methanosarcinaceae</taxon>
        <taxon>Methanosarcina</taxon>
    </lineage>
</organism>
<accession>Q8TNY3</accession>
<proteinExistence type="inferred from homology"/>